<organism>
    <name type="scientific">Staphylococcus aureus (strain USA300 / TCH1516)</name>
    <dbReference type="NCBI Taxonomy" id="451516"/>
    <lineage>
        <taxon>Bacteria</taxon>
        <taxon>Bacillati</taxon>
        <taxon>Bacillota</taxon>
        <taxon>Bacilli</taxon>
        <taxon>Bacillales</taxon>
        <taxon>Staphylococcaceae</taxon>
        <taxon>Staphylococcus</taxon>
    </lineage>
</organism>
<feature type="chain" id="PRO_1000085615" description="Acyl carrier protein">
    <location>
        <begin position="1"/>
        <end position="77"/>
    </location>
</feature>
<feature type="domain" description="Carrier" evidence="2">
    <location>
        <begin position="1"/>
        <end position="76"/>
    </location>
</feature>
<feature type="modified residue" description="O-(pantetheine 4'-phosphoryl)serine" evidence="2">
    <location>
        <position position="36"/>
    </location>
</feature>
<comment type="function">
    <text evidence="1">Carrier of the growing fatty acid chain in fatty acid biosynthesis.</text>
</comment>
<comment type="pathway">
    <text evidence="1">Lipid metabolism; fatty acid biosynthesis.</text>
</comment>
<comment type="subcellular location">
    <subcellularLocation>
        <location evidence="1">Cytoplasm</location>
    </subcellularLocation>
</comment>
<comment type="PTM">
    <text evidence="1">4'-phosphopantetheine is transferred from CoA to a specific serine of apo-ACP by AcpS. This modification is essential for activity because fatty acids are bound in thioester linkage to the sulfhydryl of the prosthetic group.</text>
</comment>
<comment type="similarity">
    <text evidence="1">Belongs to the acyl carrier protein (ACP) family.</text>
</comment>
<accession>A8Z3R8</accession>
<sequence length="77" mass="8549">MENFDKVKDIIVDRLGVDADKVTEDASFKDDLGADSLDIAELVMELEDEFGTEIPDEEAEKINTVGDAVKFINSLEK</sequence>
<protein>
    <recommendedName>
        <fullName evidence="1">Acyl carrier protein</fullName>
        <shortName evidence="1">ACP</shortName>
    </recommendedName>
</protein>
<keyword id="KW-0963">Cytoplasm</keyword>
<keyword id="KW-0275">Fatty acid biosynthesis</keyword>
<keyword id="KW-0276">Fatty acid metabolism</keyword>
<keyword id="KW-0444">Lipid biosynthesis</keyword>
<keyword id="KW-0443">Lipid metabolism</keyword>
<keyword id="KW-0596">Phosphopantetheine</keyword>
<keyword id="KW-0597">Phosphoprotein</keyword>
<name>ACP_STAAT</name>
<gene>
    <name evidence="1" type="primary">acpP</name>
    <name type="ordered locus">USA300HOU_1169</name>
</gene>
<reference key="1">
    <citation type="journal article" date="2007" name="BMC Microbiol.">
        <title>Subtle genetic changes enhance virulence of methicillin resistant and sensitive Staphylococcus aureus.</title>
        <authorList>
            <person name="Highlander S.K."/>
            <person name="Hulten K.G."/>
            <person name="Qin X."/>
            <person name="Jiang H."/>
            <person name="Yerrapragada S."/>
            <person name="Mason E.O. Jr."/>
            <person name="Shang Y."/>
            <person name="Williams T.M."/>
            <person name="Fortunov R.M."/>
            <person name="Liu Y."/>
            <person name="Igboeli O."/>
            <person name="Petrosino J."/>
            <person name="Tirumalai M."/>
            <person name="Uzman A."/>
            <person name="Fox G.E."/>
            <person name="Cardenas A.M."/>
            <person name="Muzny D.M."/>
            <person name="Hemphill L."/>
            <person name="Ding Y."/>
            <person name="Dugan S."/>
            <person name="Blyth P.R."/>
            <person name="Buhay C.J."/>
            <person name="Dinh H.H."/>
            <person name="Hawes A.C."/>
            <person name="Holder M."/>
            <person name="Kovar C.L."/>
            <person name="Lee S.L."/>
            <person name="Liu W."/>
            <person name="Nazareth L.V."/>
            <person name="Wang Q."/>
            <person name="Zhou J."/>
            <person name="Kaplan S.L."/>
            <person name="Weinstock G.M."/>
        </authorList>
    </citation>
    <scope>NUCLEOTIDE SEQUENCE [LARGE SCALE GENOMIC DNA]</scope>
    <source>
        <strain>USA300 / TCH1516</strain>
    </source>
</reference>
<evidence type="ECO:0000255" key="1">
    <source>
        <dbReference type="HAMAP-Rule" id="MF_01217"/>
    </source>
</evidence>
<evidence type="ECO:0000255" key="2">
    <source>
        <dbReference type="PROSITE-ProRule" id="PRU00258"/>
    </source>
</evidence>
<proteinExistence type="inferred from homology"/>
<dbReference type="EMBL" id="CP000730">
    <property type="protein sequence ID" value="ABX29184.1"/>
    <property type="molecule type" value="Genomic_DNA"/>
</dbReference>
<dbReference type="RefSeq" id="WP_000426914.1">
    <property type="nucleotide sequence ID" value="NC_010079.1"/>
</dbReference>
<dbReference type="SMR" id="A8Z3R8"/>
<dbReference type="KEGG" id="sax:USA300HOU_1169"/>
<dbReference type="HOGENOM" id="CLU_108696_5_1_9"/>
<dbReference type="UniPathway" id="UPA00094"/>
<dbReference type="GO" id="GO:0005829">
    <property type="term" value="C:cytosol"/>
    <property type="evidence" value="ECO:0007669"/>
    <property type="project" value="TreeGrafter"/>
</dbReference>
<dbReference type="GO" id="GO:0016020">
    <property type="term" value="C:membrane"/>
    <property type="evidence" value="ECO:0007669"/>
    <property type="project" value="GOC"/>
</dbReference>
<dbReference type="GO" id="GO:0000035">
    <property type="term" value="F:acyl binding"/>
    <property type="evidence" value="ECO:0007669"/>
    <property type="project" value="TreeGrafter"/>
</dbReference>
<dbReference type="GO" id="GO:0000036">
    <property type="term" value="F:acyl carrier activity"/>
    <property type="evidence" value="ECO:0007669"/>
    <property type="project" value="UniProtKB-UniRule"/>
</dbReference>
<dbReference type="GO" id="GO:0009245">
    <property type="term" value="P:lipid A biosynthetic process"/>
    <property type="evidence" value="ECO:0007669"/>
    <property type="project" value="TreeGrafter"/>
</dbReference>
<dbReference type="FunFam" id="1.10.1200.10:FF:000001">
    <property type="entry name" value="Acyl carrier protein"/>
    <property type="match status" value="1"/>
</dbReference>
<dbReference type="Gene3D" id="1.10.1200.10">
    <property type="entry name" value="ACP-like"/>
    <property type="match status" value="1"/>
</dbReference>
<dbReference type="HAMAP" id="MF_01217">
    <property type="entry name" value="Acyl_carrier"/>
    <property type="match status" value="1"/>
</dbReference>
<dbReference type="InterPro" id="IPR003231">
    <property type="entry name" value="ACP"/>
</dbReference>
<dbReference type="InterPro" id="IPR036736">
    <property type="entry name" value="ACP-like_sf"/>
</dbReference>
<dbReference type="InterPro" id="IPR009081">
    <property type="entry name" value="PP-bd_ACP"/>
</dbReference>
<dbReference type="InterPro" id="IPR006162">
    <property type="entry name" value="Ppantetheine_attach_site"/>
</dbReference>
<dbReference type="NCBIfam" id="TIGR00517">
    <property type="entry name" value="acyl_carrier"/>
    <property type="match status" value="1"/>
</dbReference>
<dbReference type="NCBIfam" id="NF002148">
    <property type="entry name" value="PRK00982.1-2"/>
    <property type="match status" value="1"/>
</dbReference>
<dbReference type="NCBIfam" id="NF002150">
    <property type="entry name" value="PRK00982.1-4"/>
    <property type="match status" value="1"/>
</dbReference>
<dbReference type="NCBIfam" id="NF002151">
    <property type="entry name" value="PRK00982.1-5"/>
    <property type="match status" value="1"/>
</dbReference>
<dbReference type="PANTHER" id="PTHR20863">
    <property type="entry name" value="ACYL CARRIER PROTEIN"/>
    <property type="match status" value="1"/>
</dbReference>
<dbReference type="PANTHER" id="PTHR20863:SF76">
    <property type="entry name" value="CARRIER DOMAIN-CONTAINING PROTEIN"/>
    <property type="match status" value="1"/>
</dbReference>
<dbReference type="Pfam" id="PF00550">
    <property type="entry name" value="PP-binding"/>
    <property type="match status" value="1"/>
</dbReference>
<dbReference type="SUPFAM" id="SSF47336">
    <property type="entry name" value="ACP-like"/>
    <property type="match status" value="1"/>
</dbReference>
<dbReference type="PROSITE" id="PS50075">
    <property type="entry name" value="CARRIER"/>
    <property type="match status" value="1"/>
</dbReference>
<dbReference type="PROSITE" id="PS00012">
    <property type="entry name" value="PHOSPHOPANTETHEINE"/>
    <property type="match status" value="1"/>
</dbReference>